<reference key="1">
    <citation type="journal article" date="1988" name="Virology">
        <title>Genome sequences of a mouse-avirulent and a mouse-virulent strain of Ross River virus.</title>
        <authorList>
            <person name="Faragher S.G."/>
            <person name="Meek A.D.J."/>
            <person name="Rice C.M."/>
            <person name="Dalgarno L."/>
        </authorList>
    </citation>
    <scope>NUCLEOTIDE SEQUENCE [GENOMIC RNA]</scope>
</reference>
<proteinExistence type="inferred from homology"/>
<protein>
    <recommendedName>
        <fullName>Polyprotein P1234</fullName>
        <shortName>P1234</shortName>
    </recommendedName>
    <alternativeName>
        <fullName>Non-structural polyprotein</fullName>
    </alternativeName>
    <component>
        <recommendedName>
            <fullName>Polyprotein P123'</fullName>
            <shortName>P123'</shortName>
        </recommendedName>
    </component>
    <component>
        <recommendedName>
            <fullName>Polyprotein P123</fullName>
            <shortName>P123</shortName>
        </recommendedName>
    </component>
    <component>
        <recommendedName>
            <fullName>mRNA-capping enzyme nsP1</fullName>
            <ecNumber evidence="5">2.1.1.-</ecNumber>
            <ecNumber evidence="5">2.7.7.-</ecNumber>
        </recommendedName>
        <alternativeName>
            <fullName>Non-structural protein 1</fullName>
        </alternativeName>
    </component>
    <component>
        <recommendedName>
            <fullName>Protease nsP2</fullName>
            <ecNumber evidence="7">3.4.22.-</ecNumber>
            <ecNumber evidence="7">3.6.1.15</ecNumber>
            <ecNumber evidence="4">3.6.1.74</ecNumber>
            <ecNumber evidence="7">3.6.4.13</ecNumber>
        </recommendedName>
        <alternativeName>
            <fullName>Non-structural protein 2</fullName>
            <shortName>nsP2</shortName>
        </alternativeName>
    </component>
    <component>
        <recommendedName>
            <fullName>Non-structural protein 3'</fullName>
            <shortName>nsP3'</shortName>
            <ecNumber evidence="14">3.1.3.84</ecNumber>
        </recommendedName>
    </component>
    <component>
        <recommendedName>
            <fullName>Non-structural protein 3</fullName>
            <shortName>nsP3</shortName>
            <ecNumber evidence="7">3.1.3.84</ecNumber>
        </recommendedName>
    </component>
    <component>
        <recommendedName>
            <fullName>RNA-directed RNA polymerase nsP4</fullName>
            <ecNumber evidence="3">2.7.7.19</ecNumber>
            <ecNumber evidence="9">2.7.7.48</ecNumber>
        </recommendedName>
        <alternativeName>
            <fullName>Non-structural protein 4</fullName>
            <shortName>nsP4</shortName>
        </alternativeName>
    </component>
</protein>
<evidence type="ECO:0000250" key="1"/>
<evidence type="ECO:0000250" key="2">
    <source>
        <dbReference type="UniProtKB" id="O90368"/>
    </source>
</evidence>
<evidence type="ECO:0000250" key="3">
    <source>
        <dbReference type="UniProtKB" id="P03317"/>
    </source>
</evidence>
<evidence type="ECO:0000250" key="4">
    <source>
        <dbReference type="UniProtKB" id="P08411"/>
    </source>
</evidence>
<evidence type="ECO:0000250" key="5">
    <source>
        <dbReference type="UniProtKB" id="P27282"/>
    </source>
</evidence>
<evidence type="ECO:0000250" key="6">
    <source>
        <dbReference type="UniProtKB" id="P36328"/>
    </source>
</evidence>
<evidence type="ECO:0000250" key="7">
    <source>
        <dbReference type="UniProtKB" id="Q8JUX6"/>
    </source>
</evidence>
<evidence type="ECO:0000255" key="8">
    <source>
        <dbReference type="PROSITE-ProRule" id="PRU00490"/>
    </source>
</evidence>
<evidence type="ECO:0000255" key="9">
    <source>
        <dbReference type="PROSITE-ProRule" id="PRU00539"/>
    </source>
</evidence>
<evidence type="ECO:0000255" key="10">
    <source>
        <dbReference type="PROSITE-ProRule" id="PRU00853"/>
    </source>
</evidence>
<evidence type="ECO:0000255" key="11">
    <source>
        <dbReference type="PROSITE-ProRule" id="PRU00990"/>
    </source>
</evidence>
<evidence type="ECO:0000255" key="12">
    <source>
        <dbReference type="PROSITE-ProRule" id="PRU01079"/>
    </source>
</evidence>
<evidence type="ECO:0000256" key="13">
    <source>
        <dbReference type="SAM" id="MobiDB-lite"/>
    </source>
</evidence>
<evidence type="ECO:0000305" key="14"/>
<organismHost>
    <name type="scientific">Aedes</name>
    <dbReference type="NCBI Taxonomy" id="7158"/>
</organismHost>
<organismHost>
    <name type="scientific">Culex annulirostris</name>
    <name type="common">Common banded mosquito</name>
    <dbReference type="NCBI Taxonomy" id="162997"/>
</organismHost>
<organismHost>
    <name type="scientific">Homo sapiens</name>
    <name type="common">Human</name>
    <dbReference type="NCBI Taxonomy" id="9606"/>
</organismHost>
<organismHost>
    <name type="scientific">Macropus sp.</name>
    <name type="common">kangaroo</name>
    <dbReference type="NCBI Taxonomy" id="9322"/>
</organismHost>
<dbReference type="EC" id="2.1.1.-" evidence="5"/>
<dbReference type="EC" id="2.7.7.-" evidence="5"/>
<dbReference type="EC" id="3.4.22.-" evidence="7"/>
<dbReference type="EC" id="3.6.1.15" evidence="7"/>
<dbReference type="EC" id="3.6.1.74" evidence="4"/>
<dbReference type="EC" id="3.6.4.13" evidence="7"/>
<dbReference type="EC" id="3.1.3.84" evidence="14 7"/>
<dbReference type="EC" id="2.7.7.19" evidence="3"/>
<dbReference type="EC" id="2.7.7.48" evidence="9"/>
<dbReference type="EMBL" id="M20162">
    <property type="protein sequence ID" value="AAA96329.1"/>
    <property type="molecule type" value="Genomic_RNA"/>
</dbReference>
<dbReference type="PIR" id="A28605">
    <property type="entry name" value="MNWVRA"/>
</dbReference>
<dbReference type="RefSeq" id="NP_062879.1">
    <property type="nucleotide sequence ID" value="NC_001544.1"/>
</dbReference>
<dbReference type="IntAct" id="P13887">
    <property type="interactions" value="2"/>
</dbReference>
<dbReference type="MEROPS" id="C09.001"/>
<dbReference type="GeneID" id="1489706"/>
<dbReference type="KEGG" id="vg:1489706"/>
<dbReference type="Proteomes" id="UP000006579">
    <property type="component" value="Segment"/>
</dbReference>
<dbReference type="GO" id="GO:0044162">
    <property type="term" value="C:host cell cytoplasmic vesicle membrane"/>
    <property type="evidence" value="ECO:0007669"/>
    <property type="project" value="UniProtKB-SubCell"/>
</dbReference>
<dbReference type="GO" id="GO:0044176">
    <property type="term" value="C:host cell filopodium"/>
    <property type="evidence" value="ECO:0007669"/>
    <property type="project" value="UniProtKB-SubCell"/>
</dbReference>
<dbReference type="GO" id="GO:0042025">
    <property type="term" value="C:host cell nucleus"/>
    <property type="evidence" value="ECO:0007669"/>
    <property type="project" value="UniProtKB-SubCell"/>
</dbReference>
<dbReference type="GO" id="GO:0020002">
    <property type="term" value="C:host cell plasma membrane"/>
    <property type="evidence" value="ECO:0007669"/>
    <property type="project" value="UniProtKB-SubCell"/>
</dbReference>
<dbReference type="GO" id="GO:0016020">
    <property type="term" value="C:membrane"/>
    <property type="evidence" value="ECO:0007669"/>
    <property type="project" value="UniProtKB-KW"/>
</dbReference>
<dbReference type="GO" id="GO:0005524">
    <property type="term" value="F:ATP binding"/>
    <property type="evidence" value="ECO:0007669"/>
    <property type="project" value="UniProtKB-KW"/>
</dbReference>
<dbReference type="GO" id="GO:0016887">
    <property type="term" value="F:ATP hydrolysis activity"/>
    <property type="evidence" value="ECO:0007669"/>
    <property type="project" value="RHEA"/>
</dbReference>
<dbReference type="GO" id="GO:0008234">
    <property type="term" value="F:cysteine-type peptidase activity"/>
    <property type="evidence" value="ECO:0007669"/>
    <property type="project" value="UniProtKB-KW"/>
</dbReference>
<dbReference type="GO" id="GO:0005525">
    <property type="term" value="F:GTP binding"/>
    <property type="evidence" value="ECO:0007669"/>
    <property type="project" value="UniProtKB-KW"/>
</dbReference>
<dbReference type="GO" id="GO:0046872">
    <property type="term" value="F:metal ion binding"/>
    <property type="evidence" value="ECO:0007669"/>
    <property type="project" value="UniProtKB-KW"/>
</dbReference>
<dbReference type="GO" id="GO:0140818">
    <property type="term" value="F:mRNA 5'-triphosphate monophosphatase activity"/>
    <property type="evidence" value="ECO:0007669"/>
    <property type="project" value="RHEA"/>
</dbReference>
<dbReference type="GO" id="GO:0008174">
    <property type="term" value="F:mRNA methyltransferase activity"/>
    <property type="evidence" value="ECO:0007669"/>
    <property type="project" value="InterPro"/>
</dbReference>
<dbReference type="GO" id="GO:1990817">
    <property type="term" value="F:poly(A) RNA polymerase activity"/>
    <property type="evidence" value="ECO:0007669"/>
    <property type="project" value="UniProtKB-EC"/>
</dbReference>
<dbReference type="GO" id="GO:0004651">
    <property type="term" value="F:polynucleotide 5'-phosphatase activity"/>
    <property type="evidence" value="ECO:0007669"/>
    <property type="project" value="UniProtKB-EC"/>
</dbReference>
<dbReference type="GO" id="GO:0003723">
    <property type="term" value="F:RNA binding"/>
    <property type="evidence" value="ECO:0007669"/>
    <property type="project" value="UniProtKB-KW"/>
</dbReference>
<dbReference type="GO" id="GO:0003724">
    <property type="term" value="F:RNA helicase activity"/>
    <property type="evidence" value="ECO:0007669"/>
    <property type="project" value="UniProtKB-EC"/>
</dbReference>
<dbReference type="GO" id="GO:0003968">
    <property type="term" value="F:RNA-directed RNA polymerase activity"/>
    <property type="evidence" value="ECO:0007669"/>
    <property type="project" value="UniProtKB-KW"/>
</dbReference>
<dbReference type="GO" id="GO:0006370">
    <property type="term" value="P:7-methylguanosine mRNA capping"/>
    <property type="evidence" value="ECO:0007669"/>
    <property type="project" value="UniProtKB-KW"/>
</dbReference>
<dbReference type="GO" id="GO:0006351">
    <property type="term" value="P:DNA-templated transcription"/>
    <property type="evidence" value="ECO:0007669"/>
    <property type="project" value="InterPro"/>
</dbReference>
<dbReference type="GO" id="GO:0032259">
    <property type="term" value="P:methylation"/>
    <property type="evidence" value="ECO:0007669"/>
    <property type="project" value="UniProtKB-KW"/>
</dbReference>
<dbReference type="GO" id="GO:0016556">
    <property type="term" value="P:mRNA modification"/>
    <property type="evidence" value="ECO:0007669"/>
    <property type="project" value="InterPro"/>
</dbReference>
<dbReference type="GO" id="GO:0006508">
    <property type="term" value="P:proteolysis"/>
    <property type="evidence" value="ECO:0007669"/>
    <property type="project" value="UniProtKB-KW"/>
</dbReference>
<dbReference type="GO" id="GO:0039657">
    <property type="term" value="P:symbiont-mediated suppression of host gene expression"/>
    <property type="evidence" value="ECO:0007669"/>
    <property type="project" value="UniProtKB-KW"/>
</dbReference>
<dbReference type="GO" id="GO:0039523">
    <property type="term" value="P:symbiont-mediated suppression of host mRNA transcription via inhibition of RNA polymerase II activity"/>
    <property type="evidence" value="ECO:0007669"/>
    <property type="project" value="UniProtKB-KW"/>
</dbReference>
<dbReference type="GO" id="GO:0039694">
    <property type="term" value="P:viral RNA genome replication"/>
    <property type="evidence" value="ECO:0007669"/>
    <property type="project" value="InterPro"/>
</dbReference>
<dbReference type="CDD" id="cd21557">
    <property type="entry name" value="Macro_X_Nsp3-like"/>
    <property type="match status" value="1"/>
</dbReference>
<dbReference type="CDD" id="cd23250">
    <property type="entry name" value="Togaviridae_RdRp"/>
    <property type="match status" value="1"/>
</dbReference>
<dbReference type="FunFam" id="3.40.220.10:FF:000015">
    <property type="entry name" value="Polyprotein P1234"/>
    <property type="match status" value="1"/>
</dbReference>
<dbReference type="FunFam" id="3.40.50.300:FF:001415">
    <property type="entry name" value="Polyprotein P1234"/>
    <property type="match status" value="1"/>
</dbReference>
<dbReference type="Gene3D" id="3.90.70.110">
    <property type="entry name" value="Alphavirus nsP2 protease domain"/>
    <property type="match status" value="1"/>
</dbReference>
<dbReference type="Gene3D" id="3.40.220.10">
    <property type="entry name" value="Leucine Aminopeptidase, subunit E, domain 1"/>
    <property type="match status" value="1"/>
</dbReference>
<dbReference type="Gene3D" id="3.40.50.300">
    <property type="entry name" value="P-loop containing nucleotide triphosphate hydrolases"/>
    <property type="match status" value="2"/>
</dbReference>
<dbReference type="Gene3D" id="3.40.50.150">
    <property type="entry name" value="Vaccinia Virus protein VP39"/>
    <property type="match status" value="1"/>
</dbReference>
<dbReference type="InterPro" id="IPR027351">
    <property type="entry name" value="(+)RNA_virus_helicase_core_dom"/>
</dbReference>
<dbReference type="InterPro" id="IPR002588">
    <property type="entry name" value="Alphavirus-like_MT_dom"/>
</dbReference>
<dbReference type="InterPro" id="IPR002620">
    <property type="entry name" value="Alphavirus_nsp2pro"/>
</dbReference>
<dbReference type="InterPro" id="IPR044936">
    <property type="entry name" value="Alphavirus_nsp2pro_sf"/>
</dbReference>
<dbReference type="InterPro" id="IPR043502">
    <property type="entry name" value="DNA/RNA_pol_sf"/>
</dbReference>
<dbReference type="InterPro" id="IPR002589">
    <property type="entry name" value="Macro_dom"/>
</dbReference>
<dbReference type="InterPro" id="IPR043472">
    <property type="entry name" value="Macro_dom-like"/>
</dbReference>
<dbReference type="InterPro" id="IPR044371">
    <property type="entry name" value="Macro_X_NSP3-like"/>
</dbReference>
<dbReference type="InterPro" id="IPR048891">
    <property type="entry name" value="nsP3_ZBD"/>
</dbReference>
<dbReference type="InterPro" id="IPR027417">
    <property type="entry name" value="P-loop_NTPase"/>
</dbReference>
<dbReference type="InterPro" id="IPR001788">
    <property type="entry name" value="RNA-dep_RNA_pol_alsuvir"/>
</dbReference>
<dbReference type="InterPro" id="IPR007094">
    <property type="entry name" value="RNA-dir_pol_PSvirus"/>
</dbReference>
<dbReference type="InterPro" id="IPR029063">
    <property type="entry name" value="SAM-dependent_MTases_sf"/>
</dbReference>
<dbReference type="InterPro" id="IPR047311">
    <property type="entry name" value="Togaviridae_RdRp"/>
</dbReference>
<dbReference type="InterPro" id="IPR049329">
    <property type="entry name" value="ToMV_Hel_N"/>
</dbReference>
<dbReference type="Pfam" id="PF01661">
    <property type="entry name" value="Macro"/>
    <property type="match status" value="1"/>
</dbReference>
<dbReference type="Pfam" id="PF20852">
    <property type="entry name" value="nsP3_ZBD"/>
    <property type="match status" value="1"/>
</dbReference>
<dbReference type="Pfam" id="PF01707">
    <property type="entry name" value="Peptidase_C9"/>
    <property type="match status" value="1"/>
</dbReference>
<dbReference type="Pfam" id="PF00978">
    <property type="entry name" value="RdRP_2"/>
    <property type="match status" value="1"/>
</dbReference>
<dbReference type="Pfam" id="PF20896">
    <property type="entry name" value="ToMV_Hel_N"/>
    <property type="match status" value="1"/>
</dbReference>
<dbReference type="Pfam" id="PF01443">
    <property type="entry name" value="Viral_helicase1"/>
    <property type="match status" value="1"/>
</dbReference>
<dbReference type="Pfam" id="PF01660">
    <property type="entry name" value="Vmethyltransf"/>
    <property type="match status" value="1"/>
</dbReference>
<dbReference type="SMART" id="SM00506">
    <property type="entry name" value="A1pp"/>
    <property type="match status" value="1"/>
</dbReference>
<dbReference type="SUPFAM" id="SSF56672">
    <property type="entry name" value="DNA/RNA polymerases"/>
    <property type="match status" value="1"/>
</dbReference>
<dbReference type="SUPFAM" id="SSF52949">
    <property type="entry name" value="Macro domain-like"/>
    <property type="match status" value="1"/>
</dbReference>
<dbReference type="SUPFAM" id="SSF52540">
    <property type="entry name" value="P-loop containing nucleoside triphosphate hydrolases"/>
    <property type="match status" value="1"/>
</dbReference>
<dbReference type="PROSITE" id="PS51743">
    <property type="entry name" value="ALPHAVIRUS_MT"/>
    <property type="match status" value="1"/>
</dbReference>
<dbReference type="PROSITE" id="PS51154">
    <property type="entry name" value="MACRO"/>
    <property type="match status" value="1"/>
</dbReference>
<dbReference type="PROSITE" id="PS51520">
    <property type="entry name" value="NSP2PRO"/>
    <property type="match status" value="1"/>
</dbReference>
<dbReference type="PROSITE" id="PS51657">
    <property type="entry name" value="PSRV_HELICASE"/>
    <property type="match status" value="1"/>
</dbReference>
<dbReference type="PROSITE" id="PS50507">
    <property type="entry name" value="RDRP_SSRNA_POS"/>
    <property type="match status" value="1"/>
</dbReference>
<sequence length="2480" mass="276557">MKVTVDVEADSPFLKALQKAFPAFEVESQQVTPNDHANARAFSHLATKLIEQEVPANITILDVGSAPARRLMSDHSYHCICPMKSAEDPERLANYARKLAKTAGEVLDKNVSGKITDLQDVMATPDLESPTFCLHTDETCRTRAEVAVYQDVXXHAPTSLYHQAMKGVRTVYWIGFDTTPFMFEVVAGAYPTYSTNWADEQVLQARNIGLCATSLSEGHRGKISIMRKKRLRPSDRXMFSVGXTLYIESRRLLKSWHLPSVFHLKGKNSFTCRCDTIVSCEGYVVKKITMSPGTYGKTVGYAVTHHAEGFLMCKVTDTVRGERVSFPVCTYVPATICDQMTGILATDVTPEDAQKLLVGLNQRIVVNGRTQRNTNTMKNYLLPVVAQAFSKWAREAKADMEDEKPLGTRERTLTCCCLWAFKNHKTHTMYKRPDTQTIVKVPSTFDSFVIPSLWSSSLSIGIRQRIKLLLGPKLSRDLPYSGDRNEAREAEKEAEETKEAELTREALPPLVGSNCADDVDQVDVEELTYRAGAGVVETPRNALKVTPQERDQLIGAYLILSPQTVLKSEKLTPIHPLAEQVTIMTHSGRSGRYPVDRYDGRVLVPTGAAIPVSEFQALSESATMVYNEREFINRKLHHIALYGPALNTDEENYEKVRAERAEAEYVFDVDKRTCVKREDASGLVLVGDLINPPFHEFAYEGLKIRPATPFQTTVIGVFGVPGSGKSAIIKSVVTTRDLVASGKKENCQEIVNDVKKQRGLDVTARTVDSILLNGCRRGVENLYVDEAFACHSGTLLALIAMVKPTGKVILCGDPKQCGFFNLMQLKVNFNHDICTQVLHKSISRRCTLPITAIVSTLHYQGKMRTTNLCSAPIQIDTTGTTKPAKGDIVLTCFRXWVKQLQIDYRGHEVMTAAASQGLTRKGVYAVRQKVNENPLYAPSSEHVNVLLTRTENRLVWKTLSGDPWIKVLTNIPKGDFSATLEEWQEEHDNIMNALRERSTAVDPFQNKAKVCWAKCLVQVLETAGIRMTAEEWDTVLAFREDRAYSPEVALNEICTKYYGVDLDSGLFSAQSVSLYYENNHWDNRPGGRMYGFNREVARKFEQRYPFLRGKMDSGLQVNVPERKVQPFNAECNILLLNRRLPHALVTSYQQCRGERVEWLLKKLPGYHLLLVSEYNLALPHKRVFWIAPPHVSGADRIYDLDLGLPLNAGRYDLVFVNIHTEYRTHHYQQCVDHSMKLQMLGGDSLHLLXPGGSLLIRAYGYADRVSEMVVTALARKFSAFRVLRPACVTSNTEVFLLFTNFDNGRRAVTLHQANQRLSSMFACNGLHTAGCAPSYRVRRTDISGHAEEAVVNAANAKGTVGVGVCRAVARKWPDSFKGAATPVGTAKLVQANGMNVIHAVGPNFSTVTEAEGDRELAAAYRAVAGIINASNIKSVAIPLLSTGVFSGGKDRVMQSLNHLFTAMDTTDADVVIYCRDKAWEKKIQEAIDRRTAVELVSEDISLESDLIRVHPDSCLVGRKGYSITDGKLHSYLEGTRFHQTAVDMAEISTLWPKLQDANEQICLYALGESMDSIRTKCPVEDADSSTPPKTVPCLCRYAMTAERVARLRMNNTKAIIVCSSFPLPKYRIEGVQKVKCDRVLIFDQTVPSLVSPRKYIPAAASMHADTVSLDSTVSTGSAWSFPSEATYETMEVVAEVHHSEPPVPPPRRRRAQVTMHHQELLEVSDMHTPIAARVEIPVYDTAVVAERVAIPCTSEYATPIPTPRAVRVVPVPAPRIQRASTYRVSPTPTPRVLRASVCSVTTSAGVEFPWAPEDLEVLTEPVHCEMREPVELPWEPEDVDIQFGDFETPDKIQFGDIDFDQFXLSRAGAYIFSSDTGPGHLQQKSVRQHALPCEMLYAHEEERTYPPALDEAREKLLQAKMQMAPTEANKSRYQSRKVENMKAVIIDRLKDGARTYLAEQSEKIPTYASKYPRPVYSPSVEDSLQSPEVAVAACNAFLEANYPTVASYQITDEYDAYLDMVDGSESCLDRATFCPAKLRCYPKHHAYHQPQVRSAVPSPFQNTLQNVLAAATKRNCNVTQMRELPTLDSAVFNVECFKKFACNGEYWQEFKDDPIRITTENITTYVTRLKGPKAAALFAKTHNLVPLQEVPMDRFVVDMKRDVKVTPGTKHTEERPKVQVIQAAEPLATAYLCGIHRELVRRLKAVLAPNIHTLFDMSAEDFDAIIAAHFQPGDAVLETDIASFDKSQDDSLALTALMLLEDLGVDQELLDLIEEAFGEITSVHLPTGTRFKFGAMMKSGMFLTLFINTLLNIVIACRVLREKLTNSICAAFIGDDNIVHGVRSDPLMAERCASWVNMEVKIIDATMCEKPPYFCGGFILYDNVTGSACRVADPLKRLFKLGKPLPAGDTQDEDRRRALKDETDRWARVGLKSELEIALSSRYEVNGTGNIVRAMATLAKSLKNFKKLRGPIVHLYGGPK</sequence>
<accession>P13887</accession>
<name>POLN_RRVN</name>
<keyword id="KW-0067">ATP-binding</keyword>
<keyword id="KW-1262">Eukaryotic host gene expression shutoff by virus</keyword>
<keyword id="KW-1191">Eukaryotic host transcription shutoff by virus</keyword>
<keyword id="KW-0342">GTP-binding</keyword>
<keyword id="KW-0347">Helicase</keyword>
<keyword id="KW-1032">Host cell membrane</keyword>
<keyword id="KW-1034">Host cell projection</keyword>
<keyword id="KW-1035">Host cytoplasm</keyword>
<keyword id="KW-1036">Host cytoplasmic vesicle</keyword>
<keyword id="KW-1190">Host gene expression shutoff by virus</keyword>
<keyword id="KW-1043">Host membrane</keyword>
<keyword id="KW-1048">Host nucleus</keyword>
<keyword id="KW-0945">Host-virus interaction</keyword>
<keyword id="KW-0378">Hydrolase</keyword>
<keyword id="KW-1104">Inhibition of host RNA polymerase II by virus</keyword>
<keyword id="KW-0449">Lipoprotein</keyword>
<keyword id="KW-0472">Membrane</keyword>
<keyword id="KW-0479">Metal-binding</keyword>
<keyword id="KW-0489">Methyltransferase</keyword>
<keyword id="KW-0506">mRNA capping</keyword>
<keyword id="KW-0507">mRNA processing</keyword>
<keyword id="KW-0511">Multifunctional enzyme</keyword>
<keyword id="KW-0547">Nucleotide-binding</keyword>
<keyword id="KW-0548">Nucleotidyltransferase</keyword>
<keyword id="KW-0564">Palmitate</keyword>
<keyword id="KW-0597">Phosphoprotein</keyword>
<keyword id="KW-0645">Protease</keyword>
<keyword id="KW-1159">RNA suppression of termination</keyword>
<keyword id="KW-0694">RNA-binding</keyword>
<keyword id="KW-0696">RNA-directed RNA polymerase</keyword>
<keyword id="KW-0949">S-adenosyl-L-methionine</keyword>
<keyword id="KW-0788">Thiol protease</keyword>
<keyword id="KW-0808">Transferase</keyword>
<keyword id="KW-0832">Ubl conjugation</keyword>
<keyword id="KW-0693">Viral RNA replication</keyword>
<keyword id="KW-0862">Zinc</keyword>
<comment type="function">
    <molecule>Polyprotein P1234</molecule>
    <text evidence="7">Inactive precursor of the viral replicase, which is activated by cleavages carried out by the viral protease nsP2.</text>
</comment>
<comment type="function">
    <molecule>Polyprotein P123</molecule>
    <text evidence="3">The early replication complex formed by the polyprotein P123 and nsP4 synthesizes minus-strand RNAs (By similarity). As soon P123 is cleaved into mature proteins, the plus-strand RNAs synthesis begins (By similarity).</text>
</comment>
<comment type="function">
    <molecule>Polyprotein P123'</molecule>
    <text evidence="14">The early replication complex formed by the polyprotein P123' and nsP4 synthesizes minus-strand RNAs (Probable). Polyprotein P123' is a short-lived polyprotein that accumulates during early stage of infection (Probable). As soon P123' is cleaved into mature proteins, the plus-strand RNAs synthesis begins (Probable).</text>
</comment>
<comment type="function">
    <molecule>mRNA-capping enzyme nsP1</molecule>
    <text evidence="3 4 5 7 14">Cytoplasmic capping enzyme that catalyzes two virus-specific reactions: methyltransferase and nsP1 guanylyltransferase (By similarity). mRNA-capping is necessary since all viral RNAs are synthesized in the cytoplasm, and host capping enzymes are restricted to the nucleus (Probable). The enzymatic reaction involves a covalent link between 7-methyl-GMP and nsP1, whereas eukaryotic capping enzymes form a covalent complex only with GMP (Probable). nsP1 capping consists in the following reactions: GTP is first methylated into 7-methyl-GMP and then is covalently linked to nsP1 to form the m7GMp-nsP1 complex from which 7-methyl-GMP complex is transferred to the mRNA to create the cap structure (By similarity). NsP1 is also needed for the initiation of the minus-strand RNAs synthesis (By similarity). Probably serves as a membrane anchor for the replication complex composed of nsP1-nsP4 (By similarity). Palmitoylated nsP1 is remodeling host cell cytoskeleton, and induces filopodium-like structure formation at the surface of the host cell (By similarity).</text>
</comment>
<comment type="function">
    <molecule>Protease nsP2</molecule>
    <text evidence="3 4 7">Multifunctional protein whose N-terminus is part of the RNA polymerase complex and displays NTPase, RNA triphosphatase and helicase activities (By similarity). NTPase and RNA triphosphatase are involved in viral RNA capping and helicase keeps a check on the dsRNA replication intermediates (By similarity). The C-terminus harbors a protease that specifically cleaves the polyproteins and releases the mature proteins (By similarity). Required for the shutoff of minus-strand RNAs synthesis (By similarity). Specifically inhibits the host IFN response by promoting the nuclear export of host STAT1 (By similarity). Also inhibits host transcription by inducing the rapid proteasome-dependent degradation of POLR2A, a catalytic subunit of the RNAPII complex (By similarity). The resulting inhibition of cellular protein synthesis serves to ensure maximal viral gene expression and to evade host immune response (By similarity).</text>
</comment>
<comment type="function">
    <molecule>Non-structural protein 3'</molecule>
    <text evidence="3 14">Seems to be essential for minus-strand RNAs and subgenomic 26S mRNAs synthesis (By similarity). Displays mono-ADP-ribosylhydrolase activity (Probable). ADP-ribosylation is a post-translational modification that controls various processes of the host cell and the virus probably needs to revert it for optimal viral replication (Probable). Binds proteins of FXR family and sequesters them into the viral RNA replication complexes thereby inhibiting the formation of host stress granules on viral mRNAs (Probable). The nsp3'-FXR complexes bind viral RNAs and probably orchestrate the assembly of viral replication complexes, thanks to the ability of FXR family members to self-assemble and bind DNA (Probable).</text>
</comment>
<comment type="function">
    <molecule>Non-structural protein 3</molecule>
    <text evidence="3 7">Seems to be essential for minus-strand RNAs and subgenomic 26S mRNAs synthesis (By similarity). Displays mono-ADP-ribosylhydrolase activity (By similarity). ADP-ribosylation is a post-translational modification that controls various processes of the host cell and the virus probably needs to revert it for optimal viral replication (By similarity). Binds proteins of G3BP family and sequesters them into the viral RNA replication complexes thereby inhibiting the formation of host stress granules on viral mRNAs (By similarity). The nsp3-G3BP complexes bind viral RNAs and probably orchestrate the assembly of viral replication complexes, thanks to the ability of G3BP family members to self-assemble and bind DNA (By similarity).</text>
</comment>
<comment type="function">
    <molecule>RNA-directed RNA polymerase nsP4</molecule>
    <text evidence="3">RNA dependent RNA polymerase (By similarity). Replicates genomic and antigenomic RNA by recognizing replications specific signals. The early replication complex formed by the polyprotein P123 and nsP4 synthesizes minus-strand RNAs (By similarity). The late replication complex composed of fully processed nsP1-nsP4 is responsible for the production of genomic and subgenomic plus-strand RNAs (By similarity).</text>
</comment>
<comment type="catalytic activity">
    <reaction evidence="5">
        <text>GTP + S-adenosyl-L-methionine = N(7)-methyl-GTP + S-adenosyl-L-homocysteine</text>
        <dbReference type="Rhea" id="RHEA:46948"/>
        <dbReference type="ChEBI" id="CHEBI:37565"/>
        <dbReference type="ChEBI" id="CHEBI:57856"/>
        <dbReference type="ChEBI" id="CHEBI:59789"/>
        <dbReference type="ChEBI" id="CHEBI:87133"/>
    </reaction>
</comment>
<comment type="catalytic activity">
    <reaction evidence="5">
        <text>N(7)-methyl-GTP + L-histidyl-[protein] = N(tele)-(N(7)-methylguanosine 5'-phospho)-L-histidyl-[protein] + diphosphate</text>
        <dbReference type="Rhea" id="RHEA:54792"/>
        <dbReference type="Rhea" id="RHEA-COMP:9745"/>
        <dbReference type="Rhea" id="RHEA-COMP:13995"/>
        <dbReference type="ChEBI" id="CHEBI:29979"/>
        <dbReference type="ChEBI" id="CHEBI:33019"/>
        <dbReference type="ChEBI" id="CHEBI:87133"/>
        <dbReference type="ChEBI" id="CHEBI:138334"/>
    </reaction>
    <physiologicalReaction direction="left-to-right" evidence="5">
        <dbReference type="Rhea" id="RHEA:54793"/>
    </physiologicalReaction>
</comment>
<comment type="catalytic activity">
    <reaction evidence="5">
        <text>N(tele)-(N(7)-methylguanosine 5'-phospho)-L-histidyl-[protein] + a 5'-end diphospho-(purine-ribonucleoside) in mRNA + H(+) = a 5'-end (N(7)-methyl 5'-triphosphoguanosine)-(purine-ribonucleoside) in mRNA + L-histidyl-[protein]</text>
        <dbReference type="Rhea" id="RHEA:54800"/>
        <dbReference type="Rhea" id="RHEA-COMP:9745"/>
        <dbReference type="Rhea" id="RHEA-COMP:12925"/>
        <dbReference type="Rhea" id="RHEA-COMP:13929"/>
        <dbReference type="Rhea" id="RHEA-COMP:13995"/>
        <dbReference type="ChEBI" id="CHEBI:15378"/>
        <dbReference type="ChEBI" id="CHEBI:29979"/>
        <dbReference type="ChEBI" id="CHEBI:133968"/>
        <dbReference type="ChEBI" id="CHEBI:138276"/>
        <dbReference type="ChEBI" id="CHEBI:138334"/>
    </reaction>
</comment>
<comment type="catalytic activity">
    <reaction evidence="4">
        <text>a 5'-end triphospho-ribonucleoside in mRNA + H2O = a 5'-end diphospho-ribonucleoside in mRNA + phosphate + H(+)</text>
        <dbReference type="Rhea" id="RHEA:67004"/>
        <dbReference type="Rhea" id="RHEA-COMP:17164"/>
        <dbReference type="Rhea" id="RHEA-COMP:17165"/>
        <dbReference type="ChEBI" id="CHEBI:15377"/>
        <dbReference type="ChEBI" id="CHEBI:15378"/>
        <dbReference type="ChEBI" id="CHEBI:43474"/>
        <dbReference type="ChEBI" id="CHEBI:167616"/>
        <dbReference type="ChEBI" id="CHEBI:167618"/>
        <dbReference type="EC" id="3.6.1.74"/>
    </reaction>
    <physiologicalReaction direction="left-to-right" evidence="4">
        <dbReference type="Rhea" id="RHEA:67005"/>
    </physiologicalReaction>
</comment>
<comment type="catalytic activity">
    <reaction evidence="7">
        <text>a ribonucleoside 5'-triphosphate + H2O = a ribonucleoside 5'-diphosphate + phosphate + H(+)</text>
        <dbReference type="Rhea" id="RHEA:23680"/>
        <dbReference type="ChEBI" id="CHEBI:15377"/>
        <dbReference type="ChEBI" id="CHEBI:15378"/>
        <dbReference type="ChEBI" id="CHEBI:43474"/>
        <dbReference type="ChEBI" id="CHEBI:57930"/>
        <dbReference type="ChEBI" id="CHEBI:61557"/>
        <dbReference type="EC" id="3.6.1.15"/>
    </reaction>
</comment>
<comment type="catalytic activity">
    <reaction evidence="7">
        <text>ATP + H2O = ADP + phosphate + H(+)</text>
        <dbReference type="Rhea" id="RHEA:13065"/>
        <dbReference type="ChEBI" id="CHEBI:15377"/>
        <dbReference type="ChEBI" id="CHEBI:15378"/>
        <dbReference type="ChEBI" id="CHEBI:30616"/>
        <dbReference type="ChEBI" id="CHEBI:43474"/>
        <dbReference type="ChEBI" id="CHEBI:456216"/>
        <dbReference type="EC" id="3.6.4.13"/>
    </reaction>
</comment>
<comment type="catalytic activity">
    <reaction evidence="9">
        <text>RNA(n) + a ribonucleoside 5'-triphosphate = RNA(n+1) + diphosphate</text>
        <dbReference type="Rhea" id="RHEA:21248"/>
        <dbReference type="Rhea" id="RHEA-COMP:14527"/>
        <dbReference type="Rhea" id="RHEA-COMP:17342"/>
        <dbReference type="ChEBI" id="CHEBI:33019"/>
        <dbReference type="ChEBI" id="CHEBI:61557"/>
        <dbReference type="ChEBI" id="CHEBI:140395"/>
        <dbReference type="EC" id="2.7.7.48"/>
    </reaction>
</comment>
<comment type="catalytic activity">
    <reaction evidence="7">
        <text>4-O-(ADP-D-ribosyl)-L-aspartyl-[protein] + H2O = L-aspartyl-[protein] + ADP-D-ribose + H(+)</text>
        <dbReference type="Rhea" id="RHEA:54428"/>
        <dbReference type="Rhea" id="RHEA-COMP:9867"/>
        <dbReference type="Rhea" id="RHEA-COMP:13832"/>
        <dbReference type="ChEBI" id="CHEBI:15377"/>
        <dbReference type="ChEBI" id="CHEBI:15378"/>
        <dbReference type="ChEBI" id="CHEBI:29961"/>
        <dbReference type="ChEBI" id="CHEBI:57967"/>
        <dbReference type="ChEBI" id="CHEBI:138102"/>
    </reaction>
    <physiologicalReaction direction="left-to-right" evidence="7">
        <dbReference type="Rhea" id="RHEA:54429"/>
    </physiologicalReaction>
</comment>
<comment type="catalytic activity">
    <reaction evidence="7">
        <text>5-O-(ADP-D-ribosyl)-L-glutamyl-[protein] + H2O = L-glutamyl-[protein] + ADP-D-ribose + H(+)</text>
        <dbReference type="Rhea" id="RHEA:58248"/>
        <dbReference type="Rhea" id="RHEA-COMP:10208"/>
        <dbReference type="Rhea" id="RHEA-COMP:15089"/>
        <dbReference type="ChEBI" id="CHEBI:15377"/>
        <dbReference type="ChEBI" id="CHEBI:15378"/>
        <dbReference type="ChEBI" id="CHEBI:29973"/>
        <dbReference type="ChEBI" id="CHEBI:57967"/>
        <dbReference type="ChEBI" id="CHEBI:142540"/>
    </reaction>
    <physiologicalReaction direction="left-to-right" evidence="7">
        <dbReference type="Rhea" id="RHEA:58249"/>
    </physiologicalReaction>
</comment>
<comment type="catalytic activity">
    <reaction evidence="3">
        <text>RNA(n) + ATP = RNA(n)-3'-adenine ribonucleotide + diphosphate</text>
        <dbReference type="Rhea" id="RHEA:11332"/>
        <dbReference type="Rhea" id="RHEA-COMP:14527"/>
        <dbReference type="Rhea" id="RHEA-COMP:17347"/>
        <dbReference type="ChEBI" id="CHEBI:30616"/>
        <dbReference type="ChEBI" id="CHEBI:33019"/>
        <dbReference type="ChEBI" id="CHEBI:140395"/>
        <dbReference type="ChEBI" id="CHEBI:173115"/>
        <dbReference type="EC" id="2.7.7.19"/>
    </reaction>
</comment>
<comment type="catalytic activity">
    <reaction evidence="7">
        <text>ADP-alpha-D-ribose 1''-phosphate + H2O = ADP-D-ribose + phosphate</text>
        <dbReference type="Rhea" id="RHEA:25029"/>
        <dbReference type="ChEBI" id="CHEBI:15377"/>
        <dbReference type="ChEBI" id="CHEBI:43474"/>
        <dbReference type="ChEBI" id="CHEBI:57967"/>
        <dbReference type="ChEBI" id="CHEBI:58753"/>
        <dbReference type="EC" id="3.1.3.84"/>
    </reaction>
    <physiologicalReaction direction="left-to-right" evidence="7">
        <dbReference type="Rhea" id="RHEA:25030"/>
    </physiologicalReaction>
</comment>
<comment type="cofactor">
    <cofactor evidence="3">
        <name>Mg(2+)</name>
        <dbReference type="ChEBI" id="CHEBI:18420"/>
    </cofactor>
    <cofactor evidence="3">
        <name>Mn(2+)</name>
        <dbReference type="ChEBI" id="CHEBI:29035"/>
    </cofactor>
    <text evidence="3">For nsP4 adenylyltransferase activity; Mn(2+) supports catalysis at 60% of the levels observed with Mg(2+).</text>
</comment>
<comment type="cofactor">
    <cofactor>
        <name>Mg(2+)</name>
        <dbReference type="ChEBI" id="CHEBI:18420"/>
    </cofactor>
    <text evidence="3">For nsP4 RNA-directed RNA polymerase activity.</text>
</comment>
<comment type="cofactor">
    <cofactor evidence="5">
        <name>Mg(2+)</name>
        <dbReference type="ChEBI" id="CHEBI:18420"/>
    </cofactor>
    <text evidence="5">For nsP1 guanylylation.</text>
</comment>
<comment type="cofactor">
    <cofactor>
        <name>Mg(2+)</name>
        <dbReference type="ChEBI" id="CHEBI:18420"/>
    </cofactor>
    <text evidence="7">For nsP2 RNA triphosphatase activity.</text>
</comment>
<comment type="cofactor">
    <cofactor>
        <name>Mg(2+)</name>
        <dbReference type="ChEBI" id="CHEBI:18420"/>
    </cofactor>
    <text evidence="7">For nsP2 NTPase activity.</text>
</comment>
<comment type="subunit">
    <molecule>mRNA-capping enzyme nsP1</molecule>
    <text evidence="3 5 7">Interacts with non-structural protein 3 (By similarity). Interacts with RNA-directed RNA polymerase nsP4 (By similarity). Interacts with protease nsP2 (By similarity). interacts with itself (By similarity).</text>
</comment>
<comment type="subunit">
    <molecule>Non-structural protein 3</molecule>
    <text evidence="3 5 7">Interacts with mRNA-capping enzyme nsP1 (By similarity). Interacts with host DDX1 (By similarity). Interacts with host DDX3 (By similarity). Interacts (via C-terminus) with host G3BP1; this interaction inhibits the formation of host stress granules on viral mRNAs and the nsp3-G3BP1 complexes bind viral RNAs and probably orchestrate the assembly of viral replication complexes (By similarity). Interacts (via C-terminus) with host G3BP2; this interaction inhibits the formation of host stress granules on viral mRNAs and the nsp3-G3BP2 complexes bind viral RNAs and probably orchestrate the assembly of viral replication complexes (By similarity).</text>
</comment>
<comment type="subunit">
    <molecule>RNA-directed RNA polymerase nsP4</molecule>
    <text evidence="3 5 7">Interacts with mRNA-capping enzyme nsP1 (By similarity). Interacts with protease nsP2 (By similarity). interacts with itself (By similarity).</text>
</comment>
<comment type="subunit">
    <molecule>Protease nsP2</molecule>
    <text evidence="3 5 7">Interacts with RNA-directed RNA polymerase nsP4 (By similarity). Interacts with mRNA-capping enzyme nsP1 (By similarity). Interacts with KPNA1/karyopherin-alpha1; this interaction probably allows the active transport of protease nsP2 into the host nucleus (By similarity).</text>
</comment>
<comment type="subcellular location">
    <molecule>Polyprotein P1234</molecule>
    <subcellularLocation>
        <location evidence="14">Host cytoplasmic vesicle membrane</location>
        <topology evidence="14">Peripheral membrane protein</topology>
    </subcellularLocation>
    <text evidence="14">Part of cytoplasmic vesicles, which are probably formed at the plasma membrane and internalized leading to late endosomal/lysosomal spherules containing the replication complex.</text>
</comment>
<comment type="subcellular location">
    <molecule>Polyprotein P123'</molecule>
    <subcellularLocation>
        <location evidence="14">Host cytoplasmic vesicle membrane</location>
        <topology evidence="14">Peripheral membrane protein</topology>
    </subcellularLocation>
    <text evidence="14">Part of cytoplasmic vesicles, which are probably formed at the plasma membrane and internalized leading to late endosomal/lysosomal spherules containing the replication complex.</text>
</comment>
<comment type="subcellular location">
    <molecule>Polyprotein P123</molecule>
    <subcellularLocation>
        <location evidence="14">Host cytoplasmic vesicle membrane</location>
        <topology evidence="14">Peripheral membrane protein</topology>
    </subcellularLocation>
    <text evidence="14">Part of cytoplasmic vesicles, which are probably formed at the plasma membrane and internalized leading to late endosomal/lysosomal spherules containing the replication complex.</text>
</comment>
<comment type="subcellular location">
    <molecule>mRNA-capping enzyme nsP1</molecule>
    <subcellularLocation>
        <location evidence="4">Host cytoplasmic vesicle membrane</location>
        <topology evidence="4">Lipid-anchor</topology>
    </subcellularLocation>
    <subcellularLocation>
        <location evidence="4">Host cell membrane</location>
        <topology evidence="4">Lipid-anchor</topology>
        <orientation evidence="4">Cytoplasmic side</orientation>
    </subcellularLocation>
    <subcellularLocation>
        <location evidence="7">Host cell projection</location>
        <location evidence="7">Host filopodium</location>
    </subcellularLocation>
    <text evidence="4 7">In the late phase of infection, the polyprotein is quickly cleaved before localization to cellular membranes. Then a fraction of nsP1 localizes to the inner surface of the plasma membrane and its filopodial extensions. Only the palmitoylated nsP1 localizes to the host filopodia (By similarity). NsP1 is also part of cytoplasmic vesicles, which are probably formed at the plasma membrane and internalized leading to late endosomal/lysosomal spherules containing the replication complex (By similarity).</text>
</comment>
<comment type="subcellular location">
    <molecule>Protease nsP2</molecule>
    <subcellularLocation>
        <location evidence="4">Host cytoplasmic vesicle membrane</location>
        <topology evidence="4">Peripheral membrane protein</topology>
    </subcellularLocation>
    <subcellularLocation>
        <location evidence="5">Host nucleus</location>
    </subcellularLocation>
    <subcellularLocation>
        <location evidence="5">Host cytoplasm</location>
    </subcellularLocation>
    <text evidence="4 5">In the late phase of infection, the polyprotein is quickly cleaved before localization to cellular membranes. Then approximately half of nsP2 is found in the nucleus (By similarity). Shuttles between cytoplasm and nucleus (By similarity). NsP2 is also part of cytoplasmic vesicles, which are probably formed at the plasma membrane and internalized leading to late endosomal/lysosomal spherules containing the replication complex (By similarity).</text>
</comment>
<comment type="subcellular location">
    <molecule>Non-structural protein 3'</molecule>
    <subcellularLocation>
        <location evidence="3">Host cytoplasmic vesicle membrane</location>
        <topology evidence="14">Peripheral membrane protein</topology>
    </subcellularLocation>
    <text evidence="3">In the late phase of infection, the polyprotein is quickly cleaved before localization to cellular membranes. Then nsP3 and nsP3' form aggregates in cytoplasm (By similarity). NsP3' is also part of cytoplasmic vesicles, which are probably formed at the plasma membrane and internalized leading to late endosomal/lysosomal spherules containing the replication complex (By similarity).</text>
</comment>
<comment type="subcellular location">
    <molecule>Non-structural protein 3</molecule>
    <subcellularLocation>
        <location evidence="3">Host cytoplasmic vesicle membrane</location>
        <topology evidence="14">Peripheral membrane protein</topology>
    </subcellularLocation>
    <text evidence="3">In the late phase of infection, the polyprotein is quickly cleaved before localization to cellular membranes. Then nsP3 and nsP3' form aggregates in cytoplasm (By similarity). NsP3 is also part of cytoplasmic vesicles, which are probably formed at the plasma membrane and internalized leading to late endosomal/lysosomal spherules containing the replication complex (By similarity).</text>
</comment>
<comment type="subcellular location">
    <molecule>RNA-directed RNA polymerase nsP4</molecule>
    <subcellularLocation>
        <location>Host cytoplasmic vesicle membrane</location>
        <topology evidence="4">Peripheral membrane protein</topology>
    </subcellularLocation>
    <text evidence="4">NsP4 is part of cytoplasmic vesicles, which are probably formed at the plasma membrane and internalized leading to late endosomal/lysosomal spherules containing the replication complex.</text>
</comment>
<comment type="domain">
    <molecule>Protease nsP2</molecule>
    <text evidence="5 7">The N-terminus exhibits NTPase and RNA triphosphatase activities and is proposed to have helicase activity, whereas the C-terminus possesses protease activity (By similarity). Contains a nuclear localization signal and a nuclear export signal, these two motifs are probably involved in the shuttling between the cytoplasm and the nucleus of nsP2 (By similarity). The C-terminus is required for promoting the export of host STAT1 (By similarity).</text>
</comment>
<comment type="domain">
    <molecule>Non-structural protein 3</molecule>
    <text evidence="3 7">In the N-terminus, the macro domain displays a mono-ADP-ribosylhydrolase activity (By similarity). The central part has a zinc-binding function (By similarity). The C-terminus contains two FGDF motifs necessary and sufficient for formation of the nsP3/G3BP1 complex (By similarity).</text>
</comment>
<comment type="domain">
    <molecule>Non-structural protein 3'</molecule>
    <text evidence="3 7">In the N-terminus, the macro domain displays a mono-ADP-ribosylhydrolase activity (By similarity). The central part has a zinc-binding function (By similarity). The C-terminus contains two FGDF motifs necessary and sufficient for formation of the nsP3'/G3BP1 complex (By similarity).</text>
</comment>
<comment type="PTM">
    <molecule>Polyprotein P1234</molecule>
    <text evidence="3">Specific enzymatic cleavages in vivo yield mature proteins (By similarity). The processing of the polyprotein is temporally regulated (By similarity). In early stages (1.7 hpi), P1234 is first cleaved in trans through its nsP2 protease activity, releasing P123' and nsP4, which associate to form the early replication complex (By similarity). At the same time, P1234 is also cut at the nsP1/nsP2 site early in infection but with lower efficiency (By similarity). After replication of the viral minus-strand RNAs (4 hpi), the polyproteins are cut at the nsP1/nsP2 and nsP2/nsP3 sites very efficiently, preventing accumulation of P123' and P1234 and allowing the formation of the late replication complex (By similarity). NsP3'/nsP4 site is not cleaved anymore and P34 is produced rather than nsP4 (By similarity).</text>
</comment>
<comment type="PTM">
    <molecule>Polyprotein P123</molecule>
    <text evidence="3">Specific enzymatic cleavages in vivo yield mature proteins (By similarity). The processing of the polyprotein is temporally regulated (By similarity). In early stages (1.7 hpi), P123 is cleaved at the nsP1/nsP2 site with low efficiency (By similarity). After replication of the viral minus-strand RNAs (4 hpi), the polyproteins are cut at the nsP1/nsP2 and nsP2/nsP3 sites very efficiently, preventing accumulation of P123 and allowing the formation of the late replication complex (By similarity).</text>
</comment>
<comment type="PTM">
    <molecule>Polyprotein P123'</molecule>
    <text evidence="3">Specific enzymatic cleavages in vivo yield mature proteins (By similarity). The processing of the polyprotein is temporally regulated (By similarity). In early stages (1.7 hpi), P123' is cleaved at the nsP1/nsP2 site with low efficiency (By similarity). After replication of the viral minus-strand RNAs (4 hpi), the polyproteins are cut at the nsP1/nsP2 and nsP2/nsP3 sites very efficiently, preventing accumulation of P123' and allowing the formation of the late replication complex (By similarity).</text>
</comment>
<comment type="PTM">
    <molecule>mRNA-capping enzyme nsP1</molecule>
    <text evidence="7">Palmitoylated by host palmitoyltransferases ZDHHC2 and ZDHHC19.</text>
</comment>
<comment type="PTM">
    <molecule>Non-structural protein 3</molecule>
    <text evidence="4">Phosphorylated by host on serines and threonines.</text>
</comment>
<comment type="PTM">
    <molecule>Non-structural protein 3'</molecule>
    <text evidence="4">Phosphorylated by host on serines and threonines.</text>
</comment>
<comment type="PTM">
    <molecule>RNA-directed RNA polymerase nsP4</molecule>
    <text evidence="3">Ubiquitinated; targets the protein for rapid degradation via the ubiquitin system (By similarity). Nsp4 is present in extremely low quantities due to low frequency of translation through the amber stop-codon and the degradation by the ubiquitin pathway (By similarity).</text>
</comment>
<comment type="miscellaneous">
    <text evidence="3">Viral replication produces dsRNA in the late phase of infection, resulting in a strong activation of host EIF2AK2/PKR, leading to almost complete phosphorylation of EIF2A (By similarity). This inactivates completely cellular translation initiation, resulting shutoff of host proteins synthesis (By similarity). However, phosphorylation of EIF2A is probably not the only mechanism responsible for the host translation shutoff (By similarity). The viral translation can still occur normally because it relies on a hairpin structure in the coding region of sgRNA and is EIF2A-, EIF2D-, EIF4G- EIF4A-independent (By similarity).</text>
</comment>
<comment type="miscellaneous">
    <text evidence="2 3 14">The genome codes for P123, but readthrough of a terminator codon UGA occurs between the codons for Phe-1862 and Leu-1864 giving rise to P1234 (Probable). P1234 is cleaved quickly by nsP2 into P123' and nsP4 (By similarity). Further processing of p123' gives nsP1, nsP2 and nsP3' which is 6 amino acids longer than nsP3 since the cleavage site is after the readthrough (By similarity). This unusual molecular mechanism ensures that few nsP4 are produced compared to other non-structural proteins (By similarity). Mutant viruses with no alternative termination site grow significantly slower than wild-type virus (By similarity). The opal termination codon is frequently mutated to a sense codon on passage in cell culture (By similarity). The presence of the opal codon may be a requirement for viral maintenance in both vertebrate and invertebrate hosts and a selective advantage may be conferred in cell culture for the sense codon (By similarity).</text>
</comment>
<feature type="chain" id="PRO_0000308400" description="Polyprotein P1234">
    <location>
        <begin position="1"/>
        <end position="2479"/>
    </location>
</feature>
<feature type="chain" id="PRO_0000229031" description="Polyprotein P123">
    <location>
        <begin position="1"/>
        <end position="1869"/>
    </location>
</feature>
<feature type="chain" id="PRO_0000446652" description="Polyprotein P123'">
    <location>
        <begin position="1"/>
        <end position="1862"/>
    </location>
</feature>
<feature type="chain" id="PRO_0000041218" description="mRNA-capping enzyme nsP1">
    <location>
        <begin position="1"/>
        <end position="533"/>
    </location>
</feature>
<feature type="chain" id="PRO_0000041219" description="Protease nsP2">
    <location>
        <begin position="534"/>
        <end position="1331"/>
    </location>
</feature>
<feature type="chain" id="PRO_0000041220" description="Non-structural protein 3">
    <location>
        <begin position="1332"/>
        <end position="1869"/>
    </location>
</feature>
<feature type="chain" id="PRO_0000446653" description="Non-structural protein 3'">
    <location>
        <begin position="1332"/>
        <end position="1862"/>
    </location>
</feature>
<feature type="chain" id="PRO_0000041221" description="RNA-directed RNA polymerase nsP4">
    <location>
        <begin position="1870"/>
        <end position="2479"/>
    </location>
</feature>
<feature type="domain" description="Alphavirus-like MT" evidence="12">
    <location>
        <begin position="27"/>
        <end position="257"/>
    </location>
</feature>
<feature type="domain" description="(+)RNA virus helicase ATP-binding" evidence="11">
    <location>
        <begin position="688"/>
        <end position="840"/>
    </location>
</feature>
<feature type="domain" description="(+)RNA virus helicase C-terminal" evidence="11">
    <location>
        <begin position="841"/>
        <end position="989"/>
    </location>
</feature>
<feature type="domain" description="Peptidase C9" evidence="10">
    <location>
        <begin position="1002"/>
        <end position="1324"/>
    </location>
</feature>
<feature type="domain" description="Macro" evidence="8">
    <location>
        <begin position="1332"/>
        <end position="1491"/>
    </location>
</feature>
<feature type="domain" description="RdRp catalytic" evidence="9">
    <location>
        <begin position="2234"/>
        <end position="2349"/>
    </location>
</feature>
<feature type="region of interest" description="NsP1 membrane-binding" evidence="4">
    <location>
        <begin position="242"/>
        <end position="261"/>
    </location>
</feature>
<feature type="region of interest" description="Disordered" evidence="13">
    <location>
        <begin position="480"/>
        <end position="506"/>
    </location>
</feature>
<feature type="region of interest" description="Nucleolus localization signal" evidence="4">
    <location>
        <begin position="1003"/>
        <end position="1022"/>
    </location>
</feature>
<feature type="short sequence motif" description="Nuclear export signal" evidence="5">
    <location>
        <begin position="1055"/>
        <end position="1064"/>
    </location>
</feature>
<feature type="short sequence motif" description="Nuclear localization signal" evidence="4">
    <location>
        <begin position="1179"/>
        <end position="1183"/>
    </location>
</feature>
<feature type="short sequence motif" description="FGDF; binding to host G3BP1" evidence="4">
    <location>
        <begin position="1843"/>
        <end position="1846"/>
    </location>
</feature>
<feature type="short sequence motif" description="FGDF; binding to host G3BP1" evidence="4">
    <location>
        <begin position="1854"/>
        <end position="1857"/>
    </location>
</feature>
<feature type="compositionally biased region" description="Basic and acidic residues" evidence="13">
    <location>
        <begin position="483"/>
        <end position="504"/>
    </location>
</feature>
<feature type="active site" description="For cysteine protease nsP2 activity" evidence="10">
    <location>
        <position position="1011"/>
    </location>
</feature>
<feature type="active site" description="For cysteine protease nsP2 activity" evidence="10">
    <location>
        <position position="1080"/>
    </location>
</feature>
<feature type="binding site" evidence="11">
    <location>
        <begin position="719"/>
        <end position="726"/>
    </location>
    <ligand>
        <name>a ribonucleoside 5'-triphosphate</name>
        <dbReference type="ChEBI" id="CHEBI:61557"/>
    </ligand>
</feature>
<feature type="binding site" evidence="6">
    <location>
        <position position="1341"/>
    </location>
    <ligand>
        <name>ADP-D-ribose</name>
        <dbReference type="ChEBI" id="CHEBI:57967"/>
    </ligand>
</feature>
<feature type="binding site" evidence="7">
    <location>
        <position position="1355"/>
    </location>
    <ligand>
        <name>ADP-D-ribose</name>
        <dbReference type="ChEBI" id="CHEBI:57967"/>
    </ligand>
</feature>
<feature type="binding site" evidence="7">
    <location>
        <position position="1363"/>
    </location>
    <ligand>
        <name>ADP-D-ribose</name>
        <dbReference type="ChEBI" id="CHEBI:57967"/>
    </ligand>
</feature>
<feature type="binding site" evidence="6">
    <location>
        <position position="1443"/>
    </location>
    <ligand>
        <name>ADP-D-ribose</name>
        <dbReference type="ChEBI" id="CHEBI:57967"/>
    </ligand>
</feature>
<feature type="binding site" evidence="7">
    <location>
        <position position="1444"/>
    </location>
    <ligand>
        <name>ADP-D-ribose</name>
        <dbReference type="ChEBI" id="CHEBI:57967"/>
    </ligand>
</feature>
<feature type="binding site" evidence="6">
    <location>
        <position position="1445"/>
    </location>
    <ligand>
        <name>ADP-D-ribose</name>
        <dbReference type="ChEBI" id="CHEBI:57967"/>
    </ligand>
</feature>
<feature type="binding site" evidence="3">
    <location>
        <position position="1593"/>
    </location>
    <ligand>
        <name>Zn(2+)</name>
        <dbReference type="ChEBI" id="CHEBI:29105"/>
    </ligand>
</feature>
<feature type="binding site" evidence="3">
    <location>
        <position position="1595"/>
    </location>
    <ligand>
        <name>Zn(2+)</name>
        <dbReference type="ChEBI" id="CHEBI:29105"/>
    </ligand>
</feature>
<feature type="binding site" evidence="3">
    <location>
        <position position="1618"/>
    </location>
    <ligand>
        <name>Zn(2+)</name>
        <dbReference type="ChEBI" id="CHEBI:29105"/>
    </ligand>
</feature>
<feature type="binding site" evidence="3">
    <location>
        <position position="1636"/>
    </location>
    <ligand>
        <name>Zn(2+)</name>
        <dbReference type="ChEBI" id="CHEBI:29105"/>
    </ligand>
</feature>
<feature type="site" description="Involved in the phosphoramide link with 7-methyl-GMP" evidence="5">
    <location>
        <position position="36"/>
    </location>
</feature>
<feature type="site" description="Cleavage; by protease nsP2" evidence="3">
    <location>
        <begin position="533"/>
        <end position="534"/>
    </location>
</feature>
<feature type="site" description="Cleavage; by protease nsP2" evidence="3">
    <location>
        <begin position="1331"/>
        <end position="1332"/>
    </location>
</feature>
<feature type="site" description="Cleavage; by protease nsP2" evidence="7">
    <location>
        <begin position="1869"/>
        <end position="1870"/>
    </location>
</feature>
<feature type="modified residue" description="Phosphothreonine; by host" evidence="1">
    <location>
        <position position="1675"/>
    </location>
</feature>
<feature type="lipid moiety-binding region" description="S-palmitoyl cysteine; by host" evidence="7">
    <location>
        <position position="415"/>
    </location>
</feature>
<feature type="lipid moiety-binding region" description="S-palmitoyl cysteine; by host" evidence="7">
    <location>
        <position position="417"/>
    </location>
</feature>
<organism>
    <name type="scientific">Ross river virus (strain NB5092)</name>
    <name type="common">RRV</name>
    <dbReference type="NCBI Taxonomy" id="11031"/>
    <lineage>
        <taxon>Viruses</taxon>
        <taxon>Riboviria</taxon>
        <taxon>Orthornavirae</taxon>
        <taxon>Kitrinoviricota</taxon>
        <taxon>Alsuviricetes</taxon>
        <taxon>Martellivirales</taxon>
        <taxon>Togaviridae</taxon>
        <taxon>Alphavirus</taxon>
        <taxon>Ross River virus</taxon>
    </lineage>
</organism>